<dbReference type="EC" id="7.4.2.8" evidence="1"/>
<dbReference type="EMBL" id="AE002160">
    <property type="protein sequence ID" value="AAF38956.1"/>
    <property type="molecule type" value="Genomic_DNA"/>
</dbReference>
<dbReference type="PIR" id="G81743">
    <property type="entry name" value="G81743"/>
</dbReference>
<dbReference type="RefSeq" id="WP_010229296.1">
    <property type="nucleotide sequence ID" value="NZ_CP063055.1"/>
</dbReference>
<dbReference type="SMR" id="Q9PLM5"/>
<dbReference type="GeneID" id="1245603"/>
<dbReference type="KEGG" id="cmu:TC_0074"/>
<dbReference type="eggNOG" id="COG0653">
    <property type="taxonomic scope" value="Bacteria"/>
</dbReference>
<dbReference type="HOGENOM" id="CLU_005314_3_0_0"/>
<dbReference type="OrthoDB" id="9805579at2"/>
<dbReference type="Proteomes" id="UP000000800">
    <property type="component" value="Chromosome"/>
</dbReference>
<dbReference type="GO" id="GO:0031522">
    <property type="term" value="C:cell envelope Sec protein transport complex"/>
    <property type="evidence" value="ECO:0007669"/>
    <property type="project" value="TreeGrafter"/>
</dbReference>
<dbReference type="GO" id="GO:0005829">
    <property type="term" value="C:cytosol"/>
    <property type="evidence" value="ECO:0007669"/>
    <property type="project" value="TreeGrafter"/>
</dbReference>
<dbReference type="GO" id="GO:0005886">
    <property type="term" value="C:plasma membrane"/>
    <property type="evidence" value="ECO:0007669"/>
    <property type="project" value="UniProtKB-SubCell"/>
</dbReference>
<dbReference type="GO" id="GO:0005524">
    <property type="term" value="F:ATP binding"/>
    <property type="evidence" value="ECO:0007669"/>
    <property type="project" value="UniProtKB-UniRule"/>
</dbReference>
<dbReference type="GO" id="GO:0008564">
    <property type="term" value="F:protein-exporting ATPase activity"/>
    <property type="evidence" value="ECO:0007669"/>
    <property type="project" value="UniProtKB-EC"/>
</dbReference>
<dbReference type="GO" id="GO:0065002">
    <property type="term" value="P:intracellular protein transmembrane transport"/>
    <property type="evidence" value="ECO:0007669"/>
    <property type="project" value="UniProtKB-UniRule"/>
</dbReference>
<dbReference type="GO" id="GO:0017038">
    <property type="term" value="P:protein import"/>
    <property type="evidence" value="ECO:0007669"/>
    <property type="project" value="InterPro"/>
</dbReference>
<dbReference type="GO" id="GO:0006605">
    <property type="term" value="P:protein targeting"/>
    <property type="evidence" value="ECO:0007669"/>
    <property type="project" value="UniProtKB-UniRule"/>
</dbReference>
<dbReference type="GO" id="GO:0043952">
    <property type="term" value="P:protein transport by the Sec complex"/>
    <property type="evidence" value="ECO:0007669"/>
    <property type="project" value="TreeGrafter"/>
</dbReference>
<dbReference type="CDD" id="cd17928">
    <property type="entry name" value="DEXDc_SecA"/>
    <property type="match status" value="1"/>
</dbReference>
<dbReference type="CDD" id="cd18803">
    <property type="entry name" value="SF2_C_secA"/>
    <property type="match status" value="1"/>
</dbReference>
<dbReference type="FunFam" id="3.40.50.300:FF:000429">
    <property type="entry name" value="Preprotein translocase subunit SecA"/>
    <property type="match status" value="1"/>
</dbReference>
<dbReference type="FunFam" id="3.40.50.300:FF:000787">
    <property type="entry name" value="Protein translocase subunit SecA"/>
    <property type="match status" value="1"/>
</dbReference>
<dbReference type="Gene3D" id="1.10.3060.10">
    <property type="entry name" value="Helical scaffold and wing domains of SecA"/>
    <property type="match status" value="1"/>
</dbReference>
<dbReference type="Gene3D" id="3.40.50.300">
    <property type="entry name" value="P-loop containing nucleotide triphosphate hydrolases"/>
    <property type="match status" value="2"/>
</dbReference>
<dbReference type="Gene3D" id="3.90.1440.10">
    <property type="entry name" value="SecA, preprotein cross-linking domain"/>
    <property type="match status" value="1"/>
</dbReference>
<dbReference type="HAMAP" id="MF_01382">
    <property type="entry name" value="SecA"/>
    <property type="match status" value="1"/>
</dbReference>
<dbReference type="InterPro" id="IPR014001">
    <property type="entry name" value="Helicase_ATP-bd"/>
</dbReference>
<dbReference type="InterPro" id="IPR001650">
    <property type="entry name" value="Helicase_C-like"/>
</dbReference>
<dbReference type="InterPro" id="IPR027417">
    <property type="entry name" value="P-loop_NTPase"/>
</dbReference>
<dbReference type="InterPro" id="IPR000185">
    <property type="entry name" value="SecA"/>
</dbReference>
<dbReference type="InterPro" id="IPR020937">
    <property type="entry name" value="SecA_CS"/>
</dbReference>
<dbReference type="InterPro" id="IPR011115">
    <property type="entry name" value="SecA_DEAD"/>
</dbReference>
<dbReference type="InterPro" id="IPR014018">
    <property type="entry name" value="SecA_motor_DEAD"/>
</dbReference>
<dbReference type="InterPro" id="IPR011130">
    <property type="entry name" value="SecA_preprotein_X-link_dom"/>
</dbReference>
<dbReference type="InterPro" id="IPR044722">
    <property type="entry name" value="SecA_SF2_C"/>
</dbReference>
<dbReference type="InterPro" id="IPR011116">
    <property type="entry name" value="SecA_Wing/Scaffold"/>
</dbReference>
<dbReference type="InterPro" id="IPR036266">
    <property type="entry name" value="SecA_Wing/Scaffold_sf"/>
</dbReference>
<dbReference type="InterPro" id="IPR036670">
    <property type="entry name" value="SecA_X-link_sf"/>
</dbReference>
<dbReference type="NCBIfam" id="TIGR00963">
    <property type="entry name" value="secA"/>
    <property type="match status" value="1"/>
</dbReference>
<dbReference type="PANTHER" id="PTHR30612:SF0">
    <property type="entry name" value="CHLOROPLAST PROTEIN-TRANSPORTING ATPASE"/>
    <property type="match status" value="1"/>
</dbReference>
<dbReference type="PANTHER" id="PTHR30612">
    <property type="entry name" value="SECA INNER MEMBRANE COMPONENT OF SEC PROTEIN SECRETION SYSTEM"/>
    <property type="match status" value="1"/>
</dbReference>
<dbReference type="Pfam" id="PF21090">
    <property type="entry name" value="P-loop_SecA"/>
    <property type="match status" value="1"/>
</dbReference>
<dbReference type="Pfam" id="PF07517">
    <property type="entry name" value="SecA_DEAD"/>
    <property type="match status" value="1"/>
</dbReference>
<dbReference type="Pfam" id="PF01043">
    <property type="entry name" value="SecA_PP_bind"/>
    <property type="match status" value="1"/>
</dbReference>
<dbReference type="Pfam" id="PF07516">
    <property type="entry name" value="SecA_SW"/>
    <property type="match status" value="1"/>
</dbReference>
<dbReference type="PRINTS" id="PR00906">
    <property type="entry name" value="SECA"/>
</dbReference>
<dbReference type="SMART" id="SM00957">
    <property type="entry name" value="SecA_DEAD"/>
    <property type="match status" value="1"/>
</dbReference>
<dbReference type="SMART" id="SM00958">
    <property type="entry name" value="SecA_PP_bind"/>
    <property type="match status" value="1"/>
</dbReference>
<dbReference type="SUPFAM" id="SSF81886">
    <property type="entry name" value="Helical scaffold and wing domains of SecA"/>
    <property type="match status" value="1"/>
</dbReference>
<dbReference type="SUPFAM" id="SSF52540">
    <property type="entry name" value="P-loop containing nucleoside triphosphate hydrolases"/>
    <property type="match status" value="2"/>
</dbReference>
<dbReference type="SUPFAM" id="SSF81767">
    <property type="entry name" value="Pre-protein crosslinking domain of SecA"/>
    <property type="match status" value="1"/>
</dbReference>
<dbReference type="PROSITE" id="PS01312">
    <property type="entry name" value="SECA"/>
    <property type="match status" value="1"/>
</dbReference>
<dbReference type="PROSITE" id="PS51196">
    <property type="entry name" value="SECA_MOTOR_DEAD"/>
    <property type="match status" value="1"/>
</dbReference>
<name>SECA_CHLMU</name>
<keyword id="KW-0067">ATP-binding</keyword>
<keyword id="KW-0997">Cell inner membrane</keyword>
<keyword id="KW-1003">Cell membrane</keyword>
<keyword id="KW-0963">Cytoplasm</keyword>
<keyword id="KW-0472">Membrane</keyword>
<keyword id="KW-0547">Nucleotide-binding</keyword>
<keyword id="KW-0653">Protein transport</keyword>
<keyword id="KW-1278">Translocase</keyword>
<keyword id="KW-0811">Translocation</keyword>
<keyword id="KW-0813">Transport</keyword>
<protein>
    <recommendedName>
        <fullName evidence="1">Protein translocase subunit SecA</fullName>
        <ecNumber evidence="1">7.4.2.8</ecNumber>
    </recommendedName>
</protein>
<sequence length="968" mass="110513">MMDFLKRFFGSSQERILKRFQKLVEEVNACDEKFSSLSDDELREKTPQLKRRYQEGESLDKLLPEAYGIVKNVCRRLAGTPVEVSGYHQQWDMVPYDVQILGGIAMHKGFITEMQTGEGKTLTAVMPLYLNALTGKPVHLVTVNDYLAQRDCEWVGSVLRWLGLTTGVLVSGIPPERRKAIYQCDVVYGTASEFGFDYLRDNSIATRKEEQVGRGFYFAIIDEVDSVLIDEARTPLIISGPGEKHNPVYFELKDKVAELVHFQREMCNHIAAEARKTLDPFLGMDVLPKDRKIMEGISEACRALWLVSKGMPLNRVLRRVREHPDLRAMVDKWDVFYHAEQNKEECLERLSSLYIVVDEHNNDFELTDKGMQQWIEKIGGAAEDFVMMDMGHEYALIEEDTTLSPEDKLNRKIAVSEKDTQRKARAHGLRQLLRAHLLMERDIDYIVRDDQIVIIDEHTGRPQAGRRFSEGLHQAIEAKEHVTIRKESQTFATVTLQNFFRLYEKLAGMTGTAITESREFKEIYNLYVLQVPTFKPCLRIDHNDAFYMTEREKYQAIVAEIISAHRSGKPILIGTESVEVSEKLSRILRQNRIHHTVLNAKNHAQEAEIIAGAGKVGAVTVATNMAGRGTDIKLDKEAVAAGGLYVIGTSRHQSRRIDRQLRGRCARLGDPGAAKFFLSFEDRLMRLFASPKLNTLIRHFRPPEGEAMSDPMFDRLIETAQKRVEGRNYTIRKHTLEYDDVMNKQRQTIYAFRNDVLHADDLFIVAREQIEHVSLALAFLILKDARADHCSLPKVEEWLSYSFPVKLDDQEIRRLGNVDAVADYIGGLLIEAFDAKFSSMLTEFTEIIGSASGAQGVCNDILRSVIISHIDEEWKVHLMDMDLLRSEVGLRSVGQKDPLIEFKNESFLLFEGLIRDIRIAIVKHLFALELSLTRSDRPDNAIPTVATAFHNHDNFRPMELTIIGEEEN</sequence>
<comment type="function">
    <text evidence="1">Part of the Sec protein translocase complex. Interacts with the SecYEG preprotein conducting channel. Has a central role in coupling the hydrolysis of ATP to the transfer of proteins into and across the cell membrane, serving as an ATP-driven molecular motor driving the stepwise translocation of polypeptide chains across the membrane.</text>
</comment>
<comment type="catalytic activity">
    <reaction evidence="1">
        <text>ATP + H2O + cellular proteinSide 1 = ADP + phosphate + cellular proteinSide 2.</text>
        <dbReference type="EC" id="7.4.2.8"/>
    </reaction>
</comment>
<comment type="subunit">
    <text evidence="1">Monomer and homodimer. Part of the essential Sec protein translocation apparatus which comprises SecA, SecYEG and auxiliary proteins SecDF. Other proteins may also be involved.</text>
</comment>
<comment type="subcellular location">
    <subcellularLocation>
        <location evidence="1">Cell inner membrane</location>
        <topology evidence="1">Peripheral membrane protein</topology>
        <orientation evidence="1">Cytoplasmic side</orientation>
    </subcellularLocation>
    <subcellularLocation>
        <location evidence="1">Cytoplasm</location>
    </subcellularLocation>
    <text evidence="1">Distribution is 50-50.</text>
</comment>
<comment type="similarity">
    <text evidence="1">Belongs to the SecA family.</text>
</comment>
<evidence type="ECO:0000255" key="1">
    <source>
        <dbReference type="HAMAP-Rule" id="MF_01382"/>
    </source>
</evidence>
<organism>
    <name type="scientific">Chlamydia muridarum (strain MoPn / Nigg)</name>
    <dbReference type="NCBI Taxonomy" id="243161"/>
    <lineage>
        <taxon>Bacteria</taxon>
        <taxon>Pseudomonadati</taxon>
        <taxon>Chlamydiota</taxon>
        <taxon>Chlamydiia</taxon>
        <taxon>Chlamydiales</taxon>
        <taxon>Chlamydiaceae</taxon>
        <taxon>Chlamydia/Chlamydophila group</taxon>
        <taxon>Chlamydia</taxon>
    </lineage>
</organism>
<gene>
    <name evidence="1" type="primary">secA</name>
    <name type="ordered locus">TC_0074</name>
</gene>
<reference key="1">
    <citation type="journal article" date="2000" name="Nucleic Acids Res.">
        <title>Genome sequences of Chlamydia trachomatis MoPn and Chlamydia pneumoniae AR39.</title>
        <authorList>
            <person name="Read T.D."/>
            <person name="Brunham R.C."/>
            <person name="Shen C."/>
            <person name="Gill S.R."/>
            <person name="Heidelberg J.F."/>
            <person name="White O."/>
            <person name="Hickey E.K."/>
            <person name="Peterson J.D."/>
            <person name="Utterback T.R."/>
            <person name="Berry K.J."/>
            <person name="Bass S."/>
            <person name="Linher K.D."/>
            <person name="Weidman J.F."/>
            <person name="Khouri H.M."/>
            <person name="Craven B."/>
            <person name="Bowman C."/>
            <person name="Dodson R.J."/>
            <person name="Gwinn M.L."/>
            <person name="Nelson W.C."/>
            <person name="DeBoy R.T."/>
            <person name="Kolonay J.F."/>
            <person name="McClarty G."/>
            <person name="Salzberg S.L."/>
            <person name="Eisen J.A."/>
            <person name="Fraser C.M."/>
        </authorList>
    </citation>
    <scope>NUCLEOTIDE SEQUENCE [LARGE SCALE GENOMIC DNA]</scope>
    <source>
        <strain>MoPn / Nigg</strain>
    </source>
</reference>
<feature type="chain" id="PRO_0000109582" description="Protein translocase subunit SecA">
    <location>
        <begin position="1"/>
        <end position="968"/>
    </location>
</feature>
<feature type="binding site" evidence="1">
    <location>
        <position position="99"/>
    </location>
    <ligand>
        <name>ATP</name>
        <dbReference type="ChEBI" id="CHEBI:30616"/>
    </ligand>
</feature>
<feature type="binding site" evidence="1">
    <location>
        <begin position="117"/>
        <end position="121"/>
    </location>
    <ligand>
        <name>ATP</name>
        <dbReference type="ChEBI" id="CHEBI:30616"/>
    </ligand>
</feature>
<feature type="binding site" evidence="1">
    <location>
        <position position="631"/>
    </location>
    <ligand>
        <name>ATP</name>
        <dbReference type="ChEBI" id="CHEBI:30616"/>
    </ligand>
</feature>
<accession>Q9PLM5</accession>
<proteinExistence type="inferred from homology"/>